<feature type="chain" id="PRO_0000143701" description="Maturase K">
    <location>
        <begin position="1"/>
        <end position="352" status="greater than"/>
    </location>
</feature>
<feature type="non-terminal residue">
    <location>
        <position position="352"/>
    </location>
</feature>
<accession>Q33134</accession>
<reference key="1">
    <citation type="journal article" date="1994" name="Syst. Bot.">
        <title>matK DNA sequences and phylogenetic reconstruction in Saxifragaceae sensu stricto.</title>
        <authorList>
            <person name="Johnson L.A."/>
            <person name="Soltis D.E."/>
        </authorList>
        <dbReference type="AGRICOLA" id="IND20396215"/>
    </citation>
    <scope>NUCLEOTIDE SEQUENCE [GENOMIC DNA]</scope>
    <source>
        <tissue>Leaf</tissue>
    </source>
</reference>
<dbReference type="EMBL" id="L34143">
    <property type="protein sequence ID" value="AAA84604.1"/>
    <property type="molecule type" value="Genomic_DNA"/>
</dbReference>
<dbReference type="GO" id="GO:0009507">
    <property type="term" value="C:chloroplast"/>
    <property type="evidence" value="ECO:0007669"/>
    <property type="project" value="UniProtKB-SubCell"/>
</dbReference>
<dbReference type="GO" id="GO:0003723">
    <property type="term" value="F:RNA binding"/>
    <property type="evidence" value="ECO:0007669"/>
    <property type="project" value="UniProtKB-KW"/>
</dbReference>
<dbReference type="GO" id="GO:0006397">
    <property type="term" value="P:mRNA processing"/>
    <property type="evidence" value="ECO:0007669"/>
    <property type="project" value="UniProtKB-KW"/>
</dbReference>
<dbReference type="GO" id="GO:0008033">
    <property type="term" value="P:tRNA processing"/>
    <property type="evidence" value="ECO:0007669"/>
    <property type="project" value="UniProtKB-KW"/>
</dbReference>
<dbReference type="InterPro" id="IPR002866">
    <property type="entry name" value="Maturase_MatK"/>
</dbReference>
<dbReference type="InterPro" id="IPR024942">
    <property type="entry name" value="Maturase_MatK_N"/>
</dbReference>
<dbReference type="PANTHER" id="PTHR34811">
    <property type="entry name" value="MATURASE K"/>
    <property type="match status" value="1"/>
</dbReference>
<dbReference type="PANTHER" id="PTHR34811:SF1">
    <property type="entry name" value="MATURASE K"/>
    <property type="match status" value="1"/>
</dbReference>
<dbReference type="Pfam" id="PF01824">
    <property type="entry name" value="MatK_N"/>
    <property type="match status" value="1"/>
</dbReference>
<geneLocation type="chloroplast"/>
<name>MATK_SAXOP</name>
<comment type="function">
    <text evidence="1">Usually encoded in the trnK tRNA gene intron. Probably assists in splicing its own and other chloroplast group II introns (By similarity).</text>
</comment>
<comment type="subcellular location">
    <subcellularLocation>
        <location>Plastid</location>
        <location>Chloroplast</location>
    </subcellularLocation>
</comment>
<comment type="similarity">
    <text evidence="2">Belongs to the intron maturase 2 family. MatK subfamily.</text>
</comment>
<proteinExistence type="inferred from homology"/>
<organism>
    <name type="scientific">Saxifraga oppositifolia</name>
    <name type="common">Purple mountain saxifrage</name>
    <dbReference type="NCBI Taxonomy" id="29771"/>
    <lineage>
        <taxon>Eukaryota</taxon>
        <taxon>Viridiplantae</taxon>
        <taxon>Streptophyta</taxon>
        <taxon>Embryophyta</taxon>
        <taxon>Tracheophyta</taxon>
        <taxon>Spermatophyta</taxon>
        <taxon>Magnoliopsida</taxon>
        <taxon>eudicotyledons</taxon>
        <taxon>Gunneridae</taxon>
        <taxon>Pentapetalae</taxon>
        <taxon>Saxifragales</taxon>
        <taxon>Saxifragaceae</taxon>
        <taxon>Saxifrageae</taxon>
        <taxon>Saxifraga</taxon>
    </lineage>
</organism>
<keyword id="KW-0150">Chloroplast</keyword>
<keyword id="KW-0507">mRNA processing</keyword>
<keyword id="KW-0934">Plastid</keyword>
<keyword id="KW-0694">RNA-binding</keyword>
<keyword id="KW-0819">tRNA processing</keyword>
<gene>
    <name type="primary">matK</name>
    <name type="synonym">ycf14</name>
</gene>
<protein>
    <recommendedName>
        <fullName>Maturase K</fullName>
    </recommendedName>
    <alternativeName>
        <fullName>Intron maturase</fullName>
    </alternativeName>
</protein>
<evidence type="ECO:0000250" key="1"/>
<evidence type="ECO:0000305" key="2"/>
<sequence length="352" mass="41730">MGEFQRYFQLDKFLQQDFLYPLIFHEYIYALAHDHVLNRFVFVDNFGYDNKSSSLMVKRLITRMSQQNPLLISANDSNKKKXLGHNTNXYSQMISEGFAVIGEIPFSLRLVSSVERKEEIGKSHNLRSIHSLFPFLEDNFVHLNYVSDIQIPYPIHLEIVVQALRSWLKDASSLHLLRFLLYEYQNWNSLITPTPKKLSSIVSKRNQRLFLFLYNSYVCEYESIFVFLCNQFSHLRSTSSETVFERIFFYKKRKALVEVGSKDFPPVRWLFKDPFMHYVRYQGKSILASKGTPLLIEKWKYYLVNFWQCHLYVWSKPVRIHINQLANHSFGFLGYLSSVRLNPSVVRSQMLE</sequence>